<accession>P80152</accession>
<gene>
    <name type="primary">hrpB3</name>
</gene>
<organism>
    <name type="scientific">Xanthomonas euvesicatoria</name>
    <dbReference type="NCBI Taxonomy" id="456327"/>
    <lineage>
        <taxon>Bacteria</taxon>
        <taxon>Pseudomonadati</taxon>
        <taxon>Pseudomonadota</taxon>
        <taxon>Gammaproteobacteria</taxon>
        <taxon>Lysobacterales</taxon>
        <taxon>Lysobacteraceae</taxon>
        <taxon>Xanthomonas</taxon>
    </lineage>
</organism>
<protein>
    <recommendedName>
        <fullName>Protein hrpB3</fullName>
    </recommendedName>
</protein>
<proteinExistence type="inferred from homology"/>
<evidence type="ECO:0000255" key="1">
    <source>
        <dbReference type="PROSITE-ProRule" id="PRU00303"/>
    </source>
</evidence>
<evidence type="ECO:0000305" key="2"/>
<dbReference type="EMBL" id="U33548">
    <property type="protein sequence ID" value="AAB08458.1"/>
    <property type="molecule type" value="Genomic_DNA"/>
</dbReference>
<dbReference type="EMBL" id="M99175">
    <property type="protein sequence ID" value="AAA27604.1"/>
    <property type="molecule type" value="Genomic_DNA"/>
</dbReference>
<dbReference type="SMR" id="P80152"/>
<dbReference type="PATRIC" id="fig|456327.29.peg.3433"/>
<dbReference type="OMA" id="SVFIRHD"/>
<dbReference type="GO" id="GO:0009279">
    <property type="term" value="C:cell outer membrane"/>
    <property type="evidence" value="ECO:0007669"/>
    <property type="project" value="UniProtKB-SubCell"/>
</dbReference>
<dbReference type="GO" id="GO:0009306">
    <property type="term" value="P:protein secretion"/>
    <property type="evidence" value="ECO:0007669"/>
    <property type="project" value="InterPro"/>
</dbReference>
<dbReference type="GO" id="GO:0052040">
    <property type="term" value="P:symbiont-mediated perturbation of host programmed cell death"/>
    <property type="evidence" value="ECO:0007669"/>
    <property type="project" value="UniProtKB-KW"/>
</dbReference>
<dbReference type="Gene3D" id="3.30.300.30">
    <property type="match status" value="1"/>
</dbReference>
<dbReference type="Gene3D" id="3.30.70.1530">
    <property type="entry name" value="Hypothetical protein rpa1041"/>
    <property type="match status" value="1"/>
</dbReference>
<dbReference type="InterPro" id="IPR045851">
    <property type="entry name" value="AMP-bd_C_sf"/>
</dbReference>
<dbReference type="InterPro" id="IPR006182">
    <property type="entry name" value="FliF_N_dom"/>
</dbReference>
<dbReference type="InterPro" id="IPR003282">
    <property type="entry name" value="T3SS_SctJ"/>
</dbReference>
<dbReference type="InterPro" id="IPR043427">
    <property type="entry name" value="YscJ/FliF"/>
</dbReference>
<dbReference type="NCBIfam" id="TIGR02544">
    <property type="entry name" value="III_secr_YscJ"/>
    <property type="match status" value="1"/>
</dbReference>
<dbReference type="PANTHER" id="PTHR30046">
    <property type="entry name" value="FLAGELLAR M-RING PROTEIN"/>
    <property type="match status" value="1"/>
</dbReference>
<dbReference type="PANTHER" id="PTHR30046:SF2">
    <property type="entry name" value="YOP PROTEINS TRANSLOCATION LIPOPROTEIN J"/>
    <property type="match status" value="1"/>
</dbReference>
<dbReference type="Pfam" id="PF01514">
    <property type="entry name" value="YscJ_FliF"/>
    <property type="match status" value="1"/>
</dbReference>
<dbReference type="PRINTS" id="PR01338">
    <property type="entry name" value="TYPE3OMKPROT"/>
</dbReference>
<dbReference type="PROSITE" id="PS51257">
    <property type="entry name" value="PROKAR_LIPOPROTEIN"/>
    <property type="match status" value="1"/>
</dbReference>
<sequence>MRAPRCLVVLLVALLLSACSQQLYSGLTENDANDMLEVLLHAGVDASKVTPDDGKTWAVNAPHDQVSYSLEVLRAHGLPHERHANLGEMFKKDGLISTPTEERVRFIYGVSQQLSQTLSNIDGVISADVEIVLPNNDPLSTSVKPSSAAVFIKFRVGSDLTSLVPNIKTLVMHSVEGLTYENVSVTLVPGGAESDAQFTASAPPRPSPWPWLAGCALALCLAGAAALYWWPNPQAGRWGGWQRLRELKKGKAG</sequence>
<feature type="signal peptide" evidence="1">
    <location>
        <begin position="1"/>
        <end position="18"/>
    </location>
</feature>
<feature type="chain" id="PRO_0000018222" description="Protein hrpB3">
    <location>
        <begin position="19"/>
        <end position="253"/>
    </location>
</feature>
<feature type="lipid moiety-binding region" description="N-palmitoyl cysteine" evidence="1">
    <location>
        <position position="19"/>
    </location>
</feature>
<feature type="lipid moiety-binding region" description="S-diacylglycerol cysteine" evidence="1">
    <location>
        <position position="19"/>
    </location>
</feature>
<name>HRB3_XANEU</name>
<reference key="1">
    <citation type="journal article" date="1992" name="Mol. Plant Microbe Interact.">
        <title>Determinants of pathogenicity in Xanthomonas campestris pv. vesicatoria are related to proteins involved in secretion in bacterial pathogens of animals.</title>
        <authorList>
            <person name="Fenselau S."/>
            <person name="Balbo I."/>
            <person name="Bonas U."/>
        </authorList>
    </citation>
    <scope>NUCLEOTIDE SEQUENCE [GENOMIC DNA]</scope>
    <source>
        <strain>Isolate 75-3</strain>
    </source>
</reference>
<keyword id="KW-0998">Cell outer membrane</keyword>
<keyword id="KW-0928">Hypersensitive response elicitation</keyword>
<keyword id="KW-0449">Lipoprotein</keyword>
<keyword id="KW-0472">Membrane</keyword>
<keyword id="KW-0564">Palmitate</keyword>
<keyword id="KW-0653">Protein transport</keyword>
<keyword id="KW-0732">Signal</keyword>
<keyword id="KW-0813">Transport</keyword>
<keyword id="KW-0843">Virulence</keyword>
<comment type="function">
    <text>Necessary for both basic pathogenicity and the induction of the hypersensitive response in resistant plants. Could be a part of a specific transport apparatus or a secretion apparatus that is required for pathogenicity. Hrp proteins may form a complex (tunnel/pore) that enables the export of molecules such as virulence and avirulence factors.</text>
</comment>
<comment type="subcellular location">
    <subcellularLocation>
        <location evidence="2">Cell outer membrane</location>
        <topology evidence="2">Lipid-anchor</topology>
    </subcellularLocation>
</comment>
<comment type="similarity">
    <text evidence="2">Belongs to the YscJ lipoprotein family.</text>
</comment>